<comment type="function">
    <text evidence="1">Component of the class I major histocompatibility complex (MHC). Involved in the presentation of peptide antigens to the immune system (By similarity).</text>
</comment>
<comment type="subunit">
    <text evidence="1">Heterodimer of an alpha chain and a beta chain. Beta-2-microglobulin is the beta-chain of major histocompatibility complex class I molecules (By similarity).</text>
</comment>
<comment type="subcellular location">
    <subcellularLocation>
        <location evidence="1">Secreted</location>
    </subcellularLocation>
</comment>
<comment type="similarity">
    <text evidence="3">Belongs to the beta-2-microglobulin family.</text>
</comment>
<organism>
    <name type="scientific">Plecturocebus moloch</name>
    <name type="common">Dusky titi monkey</name>
    <name type="synonym">Callicebus moloch</name>
    <dbReference type="NCBI Taxonomy" id="9523"/>
    <lineage>
        <taxon>Eukaryota</taxon>
        <taxon>Metazoa</taxon>
        <taxon>Chordata</taxon>
        <taxon>Craniata</taxon>
        <taxon>Vertebrata</taxon>
        <taxon>Euteleostomi</taxon>
        <taxon>Mammalia</taxon>
        <taxon>Eutheria</taxon>
        <taxon>Euarchontoglires</taxon>
        <taxon>Primates</taxon>
        <taxon>Haplorrhini</taxon>
        <taxon>Platyrrhini</taxon>
        <taxon>Pitheciidae</taxon>
        <taxon>Callicebinae</taxon>
        <taxon>Plecturocebus</taxon>
    </lineage>
</organism>
<reference key="1">
    <citation type="journal article" date="1999" name="Mol. Phylogenet. Evol.">
        <title>Molecular phylogeny of new world primates (Platyrrhini) based on beta2-microglobulin DNA sequences.</title>
        <authorList>
            <person name="Canavez F.C."/>
            <person name="Moreira M.A."/>
            <person name="Ladasky J.J."/>
            <person name="Pissinatti A."/>
            <person name="Parham P."/>
            <person name="Seuanez H.N."/>
        </authorList>
    </citation>
    <scope>NUCLEOTIDE SEQUENCE [GENOMIC DNA]</scope>
</reference>
<evidence type="ECO:0000250" key="1"/>
<evidence type="ECO:0000255" key="2">
    <source>
        <dbReference type="PROSITE-ProRule" id="PRU00114"/>
    </source>
</evidence>
<evidence type="ECO:0000305" key="3"/>
<name>B2MG_PLEMO</name>
<sequence>MARFVAVALLVLLSLSGLEAIQHAPKIQVYSRHPAENGKPNFLNCYVSGFHPSDIEVDLLKNGKKIEKVEHSDLSFSKDWSFYLLYYTEFTPNDKDEYACRVSHVTFSTPKTVKWDRNM</sequence>
<gene>
    <name type="primary">B2M</name>
</gene>
<keyword id="KW-1015">Disulfide bond</keyword>
<keyword id="KW-0391">Immunity</keyword>
<keyword id="KW-0393">Immunoglobulin domain</keyword>
<keyword id="KW-0490">MHC I</keyword>
<keyword id="KW-0964">Secreted</keyword>
<keyword id="KW-0732">Signal</keyword>
<accession>Q71UN3</accession>
<dbReference type="EMBL" id="AF069326">
    <property type="protein sequence ID" value="AAD17563.1"/>
    <property type="molecule type" value="Genomic_DNA"/>
</dbReference>
<dbReference type="EMBL" id="AF069325">
    <property type="protein sequence ID" value="AAD17563.1"/>
    <property type="status" value="JOINED"/>
    <property type="molecule type" value="Genomic_DNA"/>
</dbReference>
<dbReference type="SMR" id="Q71UN3"/>
<dbReference type="GO" id="GO:0005576">
    <property type="term" value="C:extracellular region"/>
    <property type="evidence" value="ECO:0007669"/>
    <property type="project" value="UniProtKB-SubCell"/>
</dbReference>
<dbReference type="GO" id="GO:0042612">
    <property type="term" value="C:MHC class I protein complex"/>
    <property type="evidence" value="ECO:0007669"/>
    <property type="project" value="UniProtKB-KW"/>
</dbReference>
<dbReference type="GO" id="GO:0002474">
    <property type="term" value="P:antigen processing and presentation of peptide antigen via MHC class I"/>
    <property type="evidence" value="ECO:0007669"/>
    <property type="project" value="UniProtKB-KW"/>
</dbReference>
<dbReference type="GO" id="GO:0006955">
    <property type="term" value="P:immune response"/>
    <property type="evidence" value="ECO:0007669"/>
    <property type="project" value="InterPro"/>
</dbReference>
<dbReference type="CDD" id="cd05770">
    <property type="entry name" value="IgC1_beta2m"/>
    <property type="match status" value="1"/>
</dbReference>
<dbReference type="FunFam" id="2.60.40.10:FF:001005">
    <property type="entry name" value="Beta-2-microglobulin"/>
    <property type="match status" value="1"/>
</dbReference>
<dbReference type="Gene3D" id="2.60.40.10">
    <property type="entry name" value="Immunoglobulins"/>
    <property type="match status" value="1"/>
</dbReference>
<dbReference type="InterPro" id="IPR015707">
    <property type="entry name" value="B2Microglobulin"/>
</dbReference>
<dbReference type="InterPro" id="IPR007110">
    <property type="entry name" value="Ig-like_dom"/>
</dbReference>
<dbReference type="InterPro" id="IPR036179">
    <property type="entry name" value="Ig-like_dom_sf"/>
</dbReference>
<dbReference type="InterPro" id="IPR013783">
    <property type="entry name" value="Ig-like_fold"/>
</dbReference>
<dbReference type="InterPro" id="IPR003006">
    <property type="entry name" value="Ig/MHC_CS"/>
</dbReference>
<dbReference type="InterPro" id="IPR003597">
    <property type="entry name" value="Ig_C1-set"/>
</dbReference>
<dbReference type="InterPro" id="IPR050160">
    <property type="entry name" value="MHC/Immunoglobulin"/>
</dbReference>
<dbReference type="PANTHER" id="PTHR19944:SF62">
    <property type="entry name" value="BETA-2-MICROGLOBULIN"/>
    <property type="match status" value="1"/>
</dbReference>
<dbReference type="PANTHER" id="PTHR19944">
    <property type="entry name" value="MHC CLASS II-RELATED"/>
    <property type="match status" value="1"/>
</dbReference>
<dbReference type="Pfam" id="PF07654">
    <property type="entry name" value="C1-set"/>
    <property type="match status" value="1"/>
</dbReference>
<dbReference type="SMART" id="SM00407">
    <property type="entry name" value="IGc1"/>
    <property type="match status" value="1"/>
</dbReference>
<dbReference type="SUPFAM" id="SSF48726">
    <property type="entry name" value="Immunoglobulin"/>
    <property type="match status" value="1"/>
</dbReference>
<dbReference type="PROSITE" id="PS50835">
    <property type="entry name" value="IG_LIKE"/>
    <property type="match status" value="1"/>
</dbReference>
<dbReference type="PROSITE" id="PS00290">
    <property type="entry name" value="IG_MHC"/>
    <property type="match status" value="1"/>
</dbReference>
<protein>
    <recommendedName>
        <fullName>Beta-2-microglobulin</fullName>
    </recommendedName>
</protein>
<feature type="signal peptide" evidence="1">
    <location>
        <begin position="1"/>
        <end position="20"/>
    </location>
</feature>
<feature type="chain" id="PRO_0000018766" description="Beta-2-microglobulin">
    <location>
        <begin position="21"/>
        <end position="119"/>
    </location>
</feature>
<feature type="domain" description="Ig-like C1-type">
    <location>
        <begin position="25"/>
        <end position="114"/>
    </location>
</feature>
<feature type="disulfide bond" evidence="2">
    <location>
        <begin position="45"/>
        <end position="100"/>
    </location>
</feature>
<proteinExistence type="inferred from homology"/>